<dbReference type="EC" id="4.1.1.65" evidence="1"/>
<dbReference type="EMBL" id="AM420293">
    <property type="protein sequence ID" value="CAL99867.1"/>
    <property type="molecule type" value="Genomic_DNA"/>
</dbReference>
<dbReference type="RefSeq" id="WP_011873083.1">
    <property type="nucleotide sequence ID" value="NC_009142.1"/>
</dbReference>
<dbReference type="STRING" id="405948.SACE_0521"/>
<dbReference type="KEGG" id="sen:SACE_0521"/>
<dbReference type="eggNOG" id="COG0688">
    <property type="taxonomic scope" value="Bacteria"/>
</dbReference>
<dbReference type="HOGENOM" id="CLU_072492_0_0_11"/>
<dbReference type="OrthoDB" id="9790893at2"/>
<dbReference type="UniPathway" id="UPA00558">
    <property type="reaction ID" value="UER00616"/>
</dbReference>
<dbReference type="Proteomes" id="UP000006728">
    <property type="component" value="Chromosome"/>
</dbReference>
<dbReference type="GO" id="GO:0005886">
    <property type="term" value="C:plasma membrane"/>
    <property type="evidence" value="ECO:0007669"/>
    <property type="project" value="UniProtKB-SubCell"/>
</dbReference>
<dbReference type="GO" id="GO:0004609">
    <property type="term" value="F:phosphatidylserine decarboxylase activity"/>
    <property type="evidence" value="ECO:0007669"/>
    <property type="project" value="UniProtKB-UniRule"/>
</dbReference>
<dbReference type="GO" id="GO:0006646">
    <property type="term" value="P:phosphatidylethanolamine biosynthetic process"/>
    <property type="evidence" value="ECO:0007669"/>
    <property type="project" value="UniProtKB-UniRule"/>
</dbReference>
<dbReference type="HAMAP" id="MF_00664">
    <property type="entry name" value="PS_decarb_PSD_A"/>
    <property type="match status" value="1"/>
</dbReference>
<dbReference type="InterPro" id="IPR003817">
    <property type="entry name" value="PS_Dcarbxylase"/>
</dbReference>
<dbReference type="InterPro" id="IPR033175">
    <property type="entry name" value="PSD-A"/>
</dbReference>
<dbReference type="NCBIfam" id="NF003678">
    <property type="entry name" value="PRK05305.1-2"/>
    <property type="match status" value="1"/>
</dbReference>
<dbReference type="NCBIfam" id="NF003679">
    <property type="entry name" value="PRK05305.1-3"/>
    <property type="match status" value="1"/>
</dbReference>
<dbReference type="NCBIfam" id="NF003685">
    <property type="entry name" value="PRK05305.2-5"/>
    <property type="match status" value="1"/>
</dbReference>
<dbReference type="PANTHER" id="PTHR35809">
    <property type="entry name" value="ARCHAETIDYLSERINE DECARBOXYLASE PROENZYME-RELATED"/>
    <property type="match status" value="1"/>
</dbReference>
<dbReference type="PANTHER" id="PTHR35809:SF1">
    <property type="entry name" value="ARCHAETIDYLSERINE DECARBOXYLASE PROENZYME-RELATED"/>
    <property type="match status" value="1"/>
</dbReference>
<dbReference type="Pfam" id="PF02666">
    <property type="entry name" value="PS_Dcarbxylase"/>
    <property type="match status" value="1"/>
</dbReference>
<reference key="1">
    <citation type="journal article" date="2007" name="Nat. Biotechnol.">
        <title>Complete genome sequence of the erythromycin-producing bacterium Saccharopolyspora erythraea NRRL23338.</title>
        <authorList>
            <person name="Oliynyk M."/>
            <person name="Samborskyy M."/>
            <person name="Lester J.B."/>
            <person name="Mironenko T."/>
            <person name="Scott N."/>
            <person name="Dickens S."/>
            <person name="Haydock S.F."/>
            <person name="Leadlay P.F."/>
        </authorList>
    </citation>
    <scope>NUCLEOTIDE SEQUENCE [LARGE SCALE GENOMIC DNA]</scope>
    <source>
        <strain>ATCC 11635 / DSM 40517 / JCM 4748 / NBRC 13426 / NCIMB 8594 / NRRL 2338</strain>
    </source>
</reference>
<accession>A4F743</accession>
<keyword id="KW-1003">Cell membrane</keyword>
<keyword id="KW-0210">Decarboxylase</keyword>
<keyword id="KW-0444">Lipid biosynthesis</keyword>
<keyword id="KW-0443">Lipid metabolism</keyword>
<keyword id="KW-0456">Lyase</keyword>
<keyword id="KW-0472">Membrane</keyword>
<keyword id="KW-0594">Phospholipid biosynthesis</keyword>
<keyword id="KW-1208">Phospholipid metabolism</keyword>
<keyword id="KW-0670">Pyruvate</keyword>
<keyword id="KW-1185">Reference proteome</keyword>
<keyword id="KW-0865">Zymogen</keyword>
<protein>
    <recommendedName>
        <fullName evidence="1">Phosphatidylserine decarboxylase proenzyme</fullName>
        <ecNumber evidence="1">4.1.1.65</ecNumber>
    </recommendedName>
    <component>
        <recommendedName>
            <fullName evidence="1">Phosphatidylserine decarboxylase alpha chain</fullName>
        </recommendedName>
    </component>
    <component>
        <recommendedName>
            <fullName evidence="1">Phosphatidylserine decarboxylase beta chain</fullName>
        </recommendedName>
    </component>
</protein>
<evidence type="ECO:0000255" key="1">
    <source>
        <dbReference type="HAMAP-Rule" id="MF_00664"/>
    </source>
</evidence>
<comment type="function">
    <text evidence="1">Catalyzes the formation of phosphatidylethanolamine (PtdEtn) from phosphatidylserine (PtdSer).</text>
</comment>
<comment type="catalytic activity">
    <reaction evidence="1">
        <text>a 1,2-diacyl-sn-glycero-3-phospho-L-serine + H(+) = a 1,2-diacyl-sn-glycero-3-phosphoethanolamine + CO2</text>
        <dbReference type="Rhea" id="RHEA:20828"/>
        <dbReference type="ChEBI" id="CHEBI:15378"/>
        <dbReference type="ChEBI" id="CHEBI:16526"/>
        <dbReference type="ChEBI" id="CHEBI:57262"/>
        <dbReference type="ChEBI" id="CHEBI:64612"/>
        <dbReference type="EC" id="4.1.1.65"/>
    </reaction>
</comment>
<comment type="cofactor">
    <cofactor evidence="1">
        <name>pyruvate</name>
        <dbReference type="ChEBI" id="CHEBI:15361"/>
    </cofactor>
    <text evidence="1">Binds 1 pyruvoyl group covalently per subunit.</text>
</comment>
<comment type="pathway">
    <text evidence="1">Phospholipid metabolism; phosphatidylethanolamine biosynthesis; phosphatidylethanolamine from CDP-diacylglycerol: step 2/2.</text>
</comment>
<comment type="subunit">
    <text evidence="1">Heterodimer of a large membrane-associated beta subunit and a small pyruvoyl-containing alpha subunit.</text>
</comment>
<comment type="subcellular location">
    <subcellularLocation>
        <location evidence="1">Cell membrane</location>
        <topology evidence="1">Peripheral membrane protein</topology>
    </subcellularLocation>
</comment>
<comment type="PTM">
    <text evidence="1">Is synthesized initially as an inactive proenzyme. Formation of the active enzyme involves a self-maturation process in which the active site pyruvoyl group is generated from an internal serine residue via an autocatalytic post-translational modification. Two non-identical subunits are generated from the proenzyme in this reaction, and the pyruvate is formed at the N-terminus of the alpha chain, which is derived from the carboxyl end of the proenzyme. The post-translation cleavage follows an unusual pathway, termed non-hydrolytic serinolysis, in which the side chain hydroxyl group of the serine supplies its oxygen atom to form the C-terminus of the beta chain, while the remainder of the serine residue undergoes an oxidative deamination to produce ammonia and the pyruvoyl prosthetic group on the alpha chain.</text>
</comment>
<comment type="similarity">
    <text evidence="1">Belongs to the phosphatidylserine decarboxylase family. PSD-A subfamily.</text>
</comment>
<name>PSD_SACEN</name>
<organism>
    <name type="scientific">Saccharopolyspora erythraea (strain ATCC 11635 / DSM 40517 / JCM 4748 / NBRC 13426 / NCIMB 8594 / NRRL 2338)</name>
    <dbReference type="NCBI Taxonomy" id="405948"/>
    <lineage>
        <taxon>Bacteria</taxon>
        <taxon>Bacillati</taxon>
        <taxon>Actinomycetota</taxon>
        <taxon>Actinomycetes</taxon>
        <taxon>Pseudonocardiales</taxon>
        <taxon>Pseudonocardiaceae</taxon>
        <taxon>Saccharopolyspora</taxon>
    </lineage>
</organism>
<proteinExistence type="inferred from homology"/>
<gene>
    <name evidence="1" type="primary">psd</name>
    <name type="ordered locus">SACE_0521</name>
</gene>
<feature type="chain" id="PRO_1000026692" description="Phosphatidylserine decarboxylase beta chain" evidence="1">
    <location>
        <begin position="1"/>
        <end position="202"/>
    </location>
</feature>
<feature type="chain" id="PRO_1000026693" description="Phosphatidylserine decarboxylase alpha chain" evidence="1">
    <location>
        <begin position="203"/>
        <end position="236"/>
    </location>
</feature>
<feature type="active site" description="Schiff-base intermediate with substrate; via pyruvic acid" evidence="1">
    <location>
        <position position="203"/>
    </location>
</feature>
<feature type="site" description="Cleavage (non-hydrolytic); by autocatalysis" evidence="1">
    <location>
        <begin position="202"/>
        <end position="203"/>
    </location>
</feature>
<feature type="modified residue" description="Pyruvic acid (Ser); by autocatalysis" evidence="1">
    <location>
        <position position="203"/>
    </location>
</feature>
<sequence length="236" mass="25166">MSTEQEPKTSPLTHLVALARDTVPPMHPAGRPFVLGAAVATLLLRRRWRGAGVLGGILTAWCAWFFREPRRTAPTRDGIAVAPADGTVAHVEKAVPPAELGLGAAPMTRVSVFLTIFDVHVQRVPLSGEVTKVSYRAGKFLSADLDKASEDNERNSMLIRGADGTEVAVVQIAGLVARRIVCSASEGDQVLAGHTYGLIRFGSRVDLYVPADSRVLVEPGQRTIGGETVIAELARA</sequence>